<feature type="chain" id="PRO_0000054347" description="Alpha-1,4-glucan:maltose-1-phosphate maltosyltransferase">
    <location>
        <begin position="1"/>
        <end position="701"/>
    </location>
</feature>
<feature type="region of interest" description="Disordered" evidence="2">
    <location>
        <begin position="286"/>
        <end position="317"/>
    </location>
</feature>
<feature type="active site" description="Nucleophile" evidence="1">
    <location>
        <position position="418"/>
    </location>
</feature>
<feature type="active site" description="Proton donor" evidence="1">
    <location>
        <position position="447"/>
    </location>
</feature>
<feature type="binding site" evidence="1">
    <location>
        <position position="288"/>
    </location>
    <ligand>
        <name>alpha-maltose 1-phosphate</name>
        <dbReference type="ChEBI" id="CHEBI:63576"/>
    </ligand>
</feature>
<feature type="binding site" evidence="1">
    <location>
        <position position="348"/>
    </location>
    <ligand>
        <name>alpha-maltose 1-phosphate</name>
        <dbReference type="ChEBI" id="CHEBI:63576"/>
    </ligand>
</feature>
<feature type="binding site" evidence="1">
    <location>
        <position position="383"/>
    </location>
    <ligand>
        <name>alpha-maltose 1-phosphate</name>
        <dbReference type="ChEBI" id="CHEBI:63576"/>
    </ligand>
</feature>
<feature type="binding site" evidence="1">
    <location>
        <position position="419"/>
    </location>
    <ligand>
        <name>alpha-maltose 1-phosphate</name>
        <dbReference type="ChEBI" id="CHEBI:63576"/>
    </ligand>
</feature>
<feature type="binding site" evidence="1">
    <location>
        <begin position="557"/>
        <end position="558"/>
    </location>
    <ligand>
        <name>alpha-maltose 1-phosphate</name>
        <dbReference type="ChEBI" id="CHEBI:63576"/>
    </ligand>
</feature>
<feature type="site" description="Transition state stabilizer" evidence="1">
    <location>
        <position position="503"/>
    </location>
</feature>
<proteinExistence type="evidence at protein level"/>
<organism>
    <name type="scientific">Mycobacterium tuberculosis (strain ATCC 25618 / H37Rv)</name>
    <dbReference type="NCBI Taxonomy" id="83332"/>
    <lineage>
        <taxon>Bacteria</taxon>
        <taxon>Bacillati</taxon>
        <taxon>Actinomycetota</taxon>
        <taxon>Actinomycetes</taxon>
        <taxon>Mycobacteriales</taxon>
        <taxon>Mycobacteriaceae</taxon>
        <taxon>Mycobacterium</taxon>
        <taxon>Mycobacterium tuberculosis complex</taxon>
    </lineage>
</organism>
<evidence type="ECO:0000250" key="1"/>
<evidence type="ECO:0000256" key="2">
    <source>
        <dbReference type="SAM" id="MobiDB-lite"/>
    </source>
</evidence>
<evidence type="ECO:0000269" key="3">
    <source>
    </source>
</evidence>
<evidence type="ECO:0000269" key="4">
    <source>
    </source>
</evidence>
<evidence type="ECO:0000305" key="5"/>
<protein>
    <recommendedName>
        <fullName>Alpha-1,4-glucan:maltose-1-phosphate maltosyltransferase</fullName>
        <shortName>GMPMT</shortName>
        <ecNumber>2.4.99.16</ecNumber>
    </recommendedName>
    <alternativeName>
        <fullName>(1-&gt;4)-alpha-D-glucan:maltose-1-phosphate alpha-D-maltosyltransferase</fullName>
    </alternativeName>
    <alternativeName>
        <fullName>(1-&gt;4)-alpha-D-glucan:phosphate alpha-D-maltosyltransferase</fullName>
    </alternativeName>
</protein>
<sequence>MSGRAIGTETEWWVPGRVEIDDVAPVVSCGVYPAKAVVGEVVPVSAAVWREGHEAVAATLVVRYLGVRYPHLTDRPRARVLPTPSEPQQRVKPLLIPMTSGQEPFVFHGQFTPDRVGLWTFRVDGWGDPIHTWRHGLIAKLDAGQGETELSNDLLVGAVLLERAATGVPRGLRDPLLAAAAALRTPGDPVTRTALALTPEIEELLADYPLRDLVTRGEQFGVWVDRPLARFGAWYEMFPRSTGGWDDDGNPVHGTFATAAAELPRIAGMGFDVVYLPPIHPIGKVHRKGRNNSPTAAPTDVGSPWAIGSDEGGHDTVHPSLGTIDDFDDFVSAARDLGMEVALDLALQCAPDHPWAREHRQWFTELPDGTIAYAENPPKKYQDIYPLNFDNDPEGLYDEVLRVVQHWVNHGVKFFRVDNPHTKPPNFWAWLIAQVKTVDPDVLFLSEAFTPPARQYGLAKLGFTQSYSYFTWRTTKWELTEFGNQIAELADYRRPNLFVNTPDILHAVLQHNGPGMFAIRAVLAATMSPAWGMYCGYELFEHRAVREGSEEYLDSEKYELRPRDFASALDQGRSLQPFITRLNIIRRLHPAFQQLRTIHFHHVDNDALLAYSKFDPATGDCVLVVVTLNAFGPEEATLWLDMAALGMEDYDRFWVRDEITGEEYQWGQANYIRIDPARAVAHIINMPAVPYESRNTLLRRR</sequence>
<keyword id="KW-0119">Carbohydrate metabolism</keyword>
<keyword id="KW-0320">Glycogen biosynthesis</keyword>
<keyword id="KW-0321">Glycogen metabolism</keyword>
<keyword id="KW-0328">Glycosyltransferase</keyword>
<keyword id="KW-1185">Reference proteome</keyword>
<keyword id="KW-0808">Transferase</keyword>
<reference key="1">
    <citation type="journal article" date="1998" name="Nature">
        <title>Deciphering the biology of Mycobacterium tuberculosis from the complete genome sequence.</title>
        <authorList>
            <person name="Cole S.T."/>
            <person name="Brosch R."/>
            <person name="Parkhill J."/>
            <person name="Garnier T."/>
            <person name="Churcher C.M."/>
            <person name="Harris D.E."/>
            <person name="Gordon S.V."/>
            <person name="Eiglmeier K."/>
            <person name="Gas S."/>
            <person name="Barry C.E. III"/>
            <person name="Tekaia F."/>
            <person name="Badcock K."/>
            <person name="Basham D."/>
            <person name="Brown D."/>
            <person name="Chillingworth T."/>
            <person name="Connor R."/>
            <person name="Davies R.M."/>
            <person name="Devlin K."/>
            <person name="Feltwell T."/>
            <person name="Gentles S."/>
            <person name="Hamlin N."/>
            <person name="Holroyd S."/>
            <person name="Hornsby T."/>
            <person name="Jagels K."/>
            <person name="Krogh A."/>
            <person name="McLean J."/>
            <person name="Moule S."/>
            <person name="Murphy L.D."/>
            <person name="Oliver S."/>
            <person name="Osborne J."/>
            <person name="Quail M.A."/>
            <person name="Rajandream M.A."/>
            <person name="Rogers J."/>
            <person name="Rutter S."/>
            <person name="Seeger K."/>
            <person name="Skelton S."/>
            <person name="Squares S."/>
            <person name="Squares R."/>
            <person name="Sulston J.E."/>
            <person name="Taylor K."/>
            <person name="Whitehead S."/>
            <person name="Barrell B.G."/>
        </authorList>
    </citation>
    <scope>NUCLEOTIDE SEQUENCE [LARGE SCALE GENOMIC DNA]</scope>
    <source>
        <strain>ATCC 25618 / H37Rv</strain>
    </source>
</reference>
<reference key="2">
    <citation type="journal article" date="2010" name="Drug News Perspect.">
        <title>The significance of GlgE as a new target for tuberculosis.</title>
        <authorList>
            <person name="Kalscheuer R."/>
            <person name="Jacobs W.R. Jr."/>
        </authorList>
    </citation>
    <scope>DRUG TARGET</scope>
</reference>
<reference key="3">
    <citation type="journal article" date="2010" name="Nat. Chem. Biol.">
        <title>Self-poisoning of Mycobacterium tuberculosis by targeting GlgE in an alpha-glucan pathway.</title>
        <authorList>
            <person name="Kalscheuer R."/>
            <person name="Syson K."/>
            <person name="Veeraraghavan U."/>
            <person name="Weinrick B."/>
            <person name="Biermann K.E."/>
            <person name="Liu Z."/>
            <person name="Sacchettini J.C."/>
            <person name="Besra G."/>
            <person name="Bornemann S."/>
            <person name="Jacobs W.R. Jr."/>
        </authorList>
    </citation>
    <scope>FUNCTION</scope>
    <scope>CATALYTIC ACTIVITY</scope>
    <scope>SUBSTRATE SPECIFICITY</scope>
    <scope>BIOPHYSICOCHEMICAL PROPERTIES</scope>
    <scope>ESSENTIALITY</scope>
    <scope>DISRUPTION PHENOTYPE</scope>
    <scope>DRUG TARGET</scope>
    <source>
        <strain>ATCC 25618 / H37Rv</strain>
    </source>
</reference>
<reference key="4">
    <citation type="journal article" date="2011" name="J. Biol. Chem.">
        <title>Structure of a Streptomyces maltosyltransferase GlgE: a homologue of a genetically validated anti-tuberculosis target.</title>
        <authorList>
            <person name="Syson K."/>
            <person name="Stevenson C.E."/>
            <person name="Rejzek M."/>
            <person name="Fairhurst S.A."/>
            <person name="Nair A."/>
            <person name="Bruton C.J."/>
            <person name="Field R.A."/>
            <person name="Chater K.F."/>
            <person name="Lawson D.M."/>
            <person name="Bornemann S."/>
        </authorList>
    </citation>
    <scope>SUBUNIT</scope>
    <source>
        <strain>ATCC 25618 / H37Rv</strain>
    </source>
</reference>
<reference key="5">
    <citation type="journal article" date="2011" name="Mol. Cell. Proteomics">
        <title>Proteogenomic analysis of Mycobacterium tuberculosis by high resolution mass spectrometry.</title>
        <authorList>
            <person name="Kelkar D.S."/>
            <person name="Kumar D."/>
            <person name="Kumar P."/>
            <person name="Balakrishnan L."/>
            <person name="Muthusamy B."/>
            <person name="Yadav A.K."/>
            <person name="Shrivastava P."/>
            <person name="Marimuthu A."/>
            <person name="Anand S."/>
            <person name="Sundaram H."/>
            <person name="Kingsbury R."/>
            <person name="Harsha H.C."/>
            <person name="Nair B."/>
            <person name="Prasad T.S."/>
            <person name="Chauhan D.S."/>
            <person name="Katoch K."/>
            <person name="Katoch V.M."/>
            <person name="Kumar P."/>
            <person name="Chaerkady R."/>
            <person name="Ramachandran S."/>
            <person name="Dash D."/>
            <person name="Pandey A."/>
        </authorList>
    </citation>
    <scope>IDENTIFICATION BY MASS SPECTROMETRY [LARGE SCALE ANALYSIS]</scope>
    <source>
        <strain>ATCC 25618 / H37Rv</strain>
    </source>
</reference>
<accession>P9WQ17</accession>
<accession>L0T7Y4</accession>
<accession>P63531</accession>
<accession>Q10638</accession>
<gene>
    <name type="primary">glgE</name>
    <name type="ordered locus">Rv1327c</name>
    <name type="ORF">MTCY130.12c</name>
</gene>
<name>GLGE_MYCTU</name>
<comment type="function">
    <text evidence="3">Essential maltosyltransferase that uses maltose 1-phosphate (M1P) as the sugar donor to elongate linear or branched alpha-(1-&gt;4)-glucans. Maltooligosaccharides with a degree of polymerization (DP) superior or equal to 4 are efficient acceptors, with DP5 being optimal in the GlgE-catalyzed polymerization with M1P. Is specific for the alpha-anomer of M1P as substrate, since the beta-anomer of M1P gives no activity. Exhibits an alpha-retaining catalytic mechanism. Is also able to catalyze the reverse reaction in vitro, releasing M1P from glycogen in the presence of inorganic phosphate. Also catalyzes disproportionation reactions through maltosyl transfer between maltooligosaccharides. Is involved in a branched alpha-glucan biosynthetic pathway from trehalose, together with TreS, Mak and GlgB.</text>
</comment>
<comment type="catalytic activity">
    <reaction evidence="3">
        <text>alpha-maltose 1-phosphate + [(1-&gt;4)-alpha-D-glucosyl](n) = [(1-&gt;4)-alpha-D-glucosyl](n+2) + phosphate</text>
        <dbReference type="Rhea" id="RHEA:42692"/>
        <dbReference type="Rhea" id="RHEA-COMP:9584"/>
        <dbReference type="Rhea" id="RHEA-COMP:10183"/>
        <dbReference type="ChEBI" id="CHEBI:15444"/>
        <dbReference type="ChEBI" id="CHEBI:43474"/>
        <dbReference type="ChEBI" id="CHEBI:63576"/>
        <dbReference type="EC" id="2.4.99.16"/>
    </reaction>
</comment>
<comment type="biophysicochemical properties">
    <kinetics>
        <KM evidence="3">35 mM for maltohexaose (in the presence of 5 mM M1P)</KM>
        <KM evidence="3">13.3 mM for maltohexaose (in the presence of 1 mM M1P)</KM>
        <KM evidence="3">0.25 mM for alpha-maltose 1-phosphate</KM>
        <KM evidence="3">6 mM for phosphate</KM>
    </kinetics>
    <phDependence>
        <text evidence="3">Optimum pH is 7.0 with maltohexaose as acceptor substrate.</text>
    </phDependence>
    <temperatureDependence>
        <text evidence="3">Optimum temperature is 37 degrees Celsius with maltohexaose as acceptor substrate.</text>
    </temperatureDependence>
</comment>
<comment type="pathway">
    <text>Glycan biosynthesis; glycogen biosynthesis.</text>
</comment>
<comment type="subunit">
    <text evidence="4">Homodimer.</text>
</comment>
<comment type="disruption phenotype">
    <text evidence="3">GlgE inactivation causes rapid death of M.tuberculosis in vitro and in mice through a self-poisoning accumulation of maltose 1-phosphate, driven by a self-amplifying feedback stress response.</text>
</comment>
<comment type="miscellaneous">
    <text>The unique combination of maltose 1-phosphate toxicity and gene essentiality within a synthetic lethal pathway validates GlgE as a distinct potential drug target that exploits new synergistic mechanisms to induce death in M.tuberculosis.</text>
</comment>
<comment type="similarity">
    <text evidence="5">Belongs to the glycosyl hydrolase 13 family. GlgE subfamily.</text>
</comment>
<dbReference type="EC" id="2.4.99.16"/>
<dbReference type="EMBL" id="AL123456">
    <property type="protein sequence ID" value="CCP44085.1"/>
    <property type="molecule type" value="Genomic_DNA"/>
</dbReference>
<dbReference type="PIR" id="C70770">
    <property type="entry name" value="C70770"/>
</dbReference>
<dbReference type="RefSeq" id="NP_215843.2">
    <property type="nucleotide sequence ID" value="NC_000962.3"/>
</dbReference>
<dbReference type="RefSeq" id="WP_003406897.1">
    <property type="nucleotide sequence ID" value="NC_000962.3"/>
</dbReference>
<dbReference type="SMR" id="P9WQ17"/>
<dbReference type="FunCoup" id="P9WQ17">
    <property type="interactions" value="23"/>
</dbReference>
<dbReference type="STRING" id="83332.Rv1327c"/>
<dbReference type="BindingDB" id="P9WQ17"/>
<dbReference type="ChEMBL" id="CHEMBL3112377"/>
<dbReference type="PaxDb" id="83332-Rv1327c"/>
<dbReference type="DNASU" id="886895"/>
<dbReference type="GeneID" id="886895"/>
<dbReference type="KEGG" id="mtu:Rv1327c"/>
<dbReference type="KEGG" id="mtv:RVBD_1327c"/>
<dbReference type="PATRIC" id="fig|83332.111.peg.1482"/>
<dbReference type="TubercuList" id="Rv1327c"/>
<dbReference type="eggNOG" id="COG0366">
    <property type="taxonomic scope" value="Bacteria"/>
</dbReference>
<dbReference type="InParanoid" id="P9WQ17"/>
<dbReference type="OrthoDB" id="9805159at2"/>
<dbReference type="PhylomeDB" id="P9WQ17"/>
<dbReference type="BioCyc" id="MetaCyc:G185E-5506-MONOMER"/>
<dbReference type="BRENDA" id="2.4.99.16">
    <property type="organism ID" value="3445"/>
</dbReference>
<dbReference type="UniPathway" id="UPA00164"/>
<dbReference type="Proteomes" id="UP000001584">
    <property type="component" value="Chromosome"/>
</dbReference>
<dbReference type="GO" id="GO:0005829">
    <property type="term" value="C:cytosol"/>
    <property type="evidence" value="ECO:0007005"/>
    <property type="project" value="MTBBASE"/>
</dbReference>
<dbReference type="GO" id="GO:0005886">
    <property type="term" value="C:plasma membrane"/>
    <property type="evidence" value="ECO:0007005"/>
    <property type="project" value="MTBBASE"/>
</dbReference>
<dbReference type="GO" id="GO:0016758">
    <property type="term" value="F:hexosyltransferase activity"/>
    <property type="evidence" value="ECO:0000314"/>
    <property type="project" value="MTBBASE"/>
</dbReference>
<dbReference type="GO" id="GO:0004553">
    <property type="term" value="F:hydrolase activity, hydrolyzing O-glycosyl compounds"/>
    <property type="evidence" value="ECO:0007669"/>
    <property type="project" value="InterPro"/>
</dbReference>
<dbReference type="GO" id="GO:0030979">
    <property type="term" value="P:alpha-glucan biosynthetic process"/>
    <property type="evidence" value="ECO:0007669"/>
    <property type="project" value="UniProtKB-UniRule"/>
</dbReference>
<dbReference type="GO" id="GO:0005978">
    <property type="term" value="P:glycogen biosynthetic process"/>
    <property type="evidence" value="ECO:0007669"/>
    <property type="project" value="UniProtKB-UniRule"/>
</dbReference>
<dbReference type="GO" id="GO:0005993">
    <property type="term" value="P:trehalose catabolic process"/>
    <property type="evidence" value="ECO:0000315"/>
    <property type="project" value="UniProtKB"/>
</dbReference>
<dbReference type="CDD" id="cd11344">
    <property type="entry name" value="AmyAc_GlgE_like"/>
    <property type="match status" value="1"/>
</dbReference>
<dbReference type="FunFam" id="2.60.40.1180:FF:000061">
    <property type="entry name" value="Alpha-1,4-glucan:maltose-1-phosphate maltosyltransferase"/>
    <property type="match status" value="1"/>
</dbReference>
<dbReference type="FunFam" id="3.20.20.80:FF:000187">
    <property type="entry name" value="Alpha-1,4-glucan:maltose-1-phosphate maltosyltransferase"/>
    <property type="match status" value="1"/>
</dbReference>
<dbReference type="Gene3D" id="3.20.20.80">
    <property type="entry name" value="Glycosidases"/>
    <property type="match status" value="1"/>
</dbReference>
<dbReference type="Gene3D" id="2.60.40.1180">
    <property type="entry name" value="Golgi alpha-mannosidase II"/>
    <property type="match status" value="1"/>
</dbReference>
<dbReference type="Gene3D" id="2.60.40.10">
    <property type="entry name" value="Immunoglobulins"/>
    <property type="match status" value="1"/>
</dbReference>
<dbReference type="Gene3D" id="1.20.58.80">
    <property type="entry name" value="Phosphotransferase system, lactose/cellobiose-type IIA subunit"/>
    <property type="match status" value="1"/>
</dbReference>
<dbReference type="HAMAP" id="MF_02124">
    <property type="entry name" value="GlgE"/>
    <property type="match status" value="1"/>
</dbReference>
<dbReference type="InterPro" id="IPR026585">
    <property type="entry name" value="GlgE"/>
</dbReference>
<dbReference type="InterPro" id="IPR049171">
    <property type="entry name" value="GLGE_C"/>
</dbReference>
<dbReference type="InterPro" id="IPR021828">
    <property type="entry name" value="GlgE_dom_N/S"/>
</dbReference>
<dbReference type="InterPro" id="IPR006047">
    <property type="entry name" value="Glyco_hydro_13_cat_dom"/>
</dbReference>
<dbReference type="InterPro" id="IPR013780">
    <property type="entry name" value="Glyco_hydro_b"/>
</dbReference>
<dbReference type="InterPro" id="IPR017853">
    <property type="entry name" value="Glycoside_hydrolase_SF"/>
</dbReference>
<dbReference type="InterPro" id="IPR013783">
    <property type="entry name" value="Ig-like_fold"/>
</dbReference>
<dbReference type="PANTHER" id="PTHR47786">
    <property type="entry name" value="ALPHA-1,4-GLUCAN:MALTOSE-1-PHOSPHATE MALTOSYLTRANSFERASE"/>
    <property type="match status" value="1"/>
</dbReference>
<dbReference type="PANTHER" id="PTHR47786:SF2">
    <property type="entry name" value="GLYCOSYL HYDROLASE FAMILY 13 CATALYTIC DOMAIN-CONTAINING PROTEIN"/>
    <property type="match status" value="1"/>
</dbReference>
<dbReference type="Pfam" id="PF00128">
    <property type="entry name" value="Alpha-amylase"/>
    <property type="match status" value="1"/>
</dbReference>
<dbReference type="Pfam" id="PF21702">
    <property type="entry name" value="GLGE_C"/>
    <property type="match status" value="1"/>
</dbReference>
<dbReference type="Pfam" id="PF11896">
    <property type="entry name" value="GlgE_dom_N_S"/>
    <property type="match status" value="1"/>
</dbReference>
<dbReference type="SMART" id="SM00642">
    <property type="entry name" value="Aamy"/>
    <property type="match status" value="1"/>
</dbReference>
<dbReference type="SUPFAM" id="SSF51445">
    <property type="entry name" value="(Trans)glycosidases"/>
    <property type="match status" value="1"/>
</dbReference>